<proteinExistence type="evidence at transcript level"/>
<evidence type="ECO:0000250" key="1"/>
<evidence type="ECO:0000250" key="2">
    <source>
        <dbReference type="UniProtKB" id="P01111"/>
    </source>
</evidence>
<evidence type="ECO:0000250" key="3">
    <source>
        <dbReference type="UniProtKB" id="P01112"/>
    </source>
</evidence>
<evidence type="ECO:0000250" key="4">
    <source>
        <dbReference type="UniProtKB" id="P01116"/>
    </source>
</evidence>
<evidence type="ECO:0000250" key="5">
    <source>
        <dbReference type="UniProtKB" id="Q04970"/>
    </source>
</evidence>
<evidence type="ECO:0000255" key="6"/>
<evidence type="ECO:0000305" key="7"/>
<dbReference type="EC" id="3.6.5.2" evidence="4"/>
<dbReference type="EMBL" id="CR858029">
    <property type="protein sequence ID" value="CAH90270.1"/>
    <property type="molecule type" value="mRNA"/>
</dbReference>
<dbReference type="RefSeq" id="NP_001127261.1">
    <property type="nucleotide sequence ID" value="NM_001133789.1"/>
</dbReference>
<dbReference type="SMR" id="Q5RD87"/>
<dbReference type="STRING" id="9601.ENSPPYP00000001163"/>
<dbReference type="GeneID" id="100174317"/>
<dbReference type="KEGG" id="pon:100174317"/>
<dbReference type="CTD" id="4893"/>
<dbReference type="eggNOG" id="KOG0395">
    <property type="taxonomic scope" value="Eukaryota"/>
</dbReference>
<dbReference type="InParanoid" id="Q5RD87"/>
<dbReference type="OrthoDB" id="5976022at2759"/>
<dbReference type="Proteomes" id="UP000001595">
    <property type="component" value="Unplaced"/>
</dbReference>
<dbReference type="GO" id="GO:0000139">
    <property type="term" value="C:Golgi membrane"/>
    <property type="evidence" value="ECO:0007669"/>
    <property type="project" value="UniProtKB-SubCell"/>
</dbReference>
<dbReference type="GO" id="GO:0005886">
    <property type="term" value="C:plasma membrane"/>
    <property type="evidence" value="ECO:0007669"/>
    <property type="project" value="UniProtKB-SubCell"/>
</dbReference>
<dbReference type="GO" id="GO:0003925">
    <property type="term" value="F:G protein activity"/>
    <property type="evidence" value="ECO:0007669"/>
    <property type="project" value="UniProtKB-EC"/>
</dbReference>
<dbReference type="GO" id="GO:0005525">
    <property type="term" value="F:GTP binding"/>
    <property type="evidence" value="ECO:0007669"/>
    <property type="project" value="UniProtKB-KW"/>
</dbReference>
<dbReference type="GO" id="GO:0003924">
    <property type="term" value="F:GTPase activity"/>
    <property type="evidence" value="ECO:0000250"/>
    <property type="project" value="UniProtKB"/>
</dbReference>
<dbReference type="GO" id="GO:0007265">
    <property type="term" value="P:Ras protein signal transduction"/>
    <property type="evidence" value="ECO:0000250"/>
    <property type="project" value="UniProtKB"/>
</dbReference>
<dbReference type="CDD" id="cd04138">
    <property type="entry name" value="H_N_K_Ras_like"/>
    <property type="match status" value="1"/>
</dbReference>
<dbReference type="FunFam" id="3.40.50.300:FF:000096">
    <property type="entry name" value="KRAS proto-oncogene, GTPase"/>
    <property type="match status" value="1"/>
</dbReference>
<dbReference type="Gene3D" id="3.40.50.300">
    <property type="entry name" value="P-loop containing nucleotide triphosphate hydrolases"/>
    <property type="match status" value="1"/>
</dbReference>
<dbReference type="InterPro" id="IPR027417">
    <property type="entry name" value="P-loop_NTPase"/>
</dbReference>
<dbReference type="InterPro" id="IPR005225">
    <property type="entry name" value="Small_GTP-bd"/>
</dbReference>
<dbReference type="InterPro" id="IPR001806">
    <property type="entry name" value="Small_GTPase"/>
</dbReference>
<dbReference type="InterPro" id="IPR020849">
    <property type="entry name" value="Small_GTPase_Ras-type"/>
</dbReference>
<dbReference type="NCBIfam" id="TIGR00231">
    <property type="entry name" value="small_GTP"/>
    <property type="match status" value="1"/>
</dbReference>
<dbReference type="PANTHER" id="PTHR24070">
    <property type="entry name" value="RAS, DI-RAS, AND RHEB FAMILY MEMBERS OF SMALL GTPASE SUPERFAMILY"/>
    <property type="match status" value="1"/>
</dbReference>
<dbReference type="Pfam" id="PF00071">
    <property type="entry name" value="Ras"/>
    <property type="match status" value="1"/>
</dbReference>
<dbReference type="PRINTS" id="PR00449">
    <property type="entry name" value="RASTRNSFRMNG"/>
</dbReference>
<dbReference type="SMART" id="SM00175">
    <property type="entry name" value="RAB"/>
    <property type="match status" value="1"/>
</dbReference>
<dbReference type="SMART" id="SM00173">
    <property type="entry name" value="RAS"/>
    <property type="match status" value="1"/>
</dbReference>
<dbReference type="SMART" id="SM00174">
    <property type="entry name" value="RHO"/>
    <property type="match status" value="1"/>
</dbReference>
<dbReference type="SUPFAM" id="SSF52540">
    <property type="entry name" value="P-loop containing nucleoside triphosphate hydrolases"/>
    <property type="match status" value="1"/>
</dbReference>
<dbReference type="PROSITE" id="PS51421">
    <property type="entry name" value="RAS"/>
    <property type="match status" value="1"/>
</dbReference>
<accession>Q5RD87</accession>
<sequence length="189" mass="21195">MTEYKLVVVGAGGVGKSALTIQLIQNHFVDEYDPTIEDSYRKQVVIDGETCLLDILDTAGQEEYSAMRDQYMRTGEGLLCVFAINNSKSFADINLYREQIKRVKDSDDVPMVLVGNKCDLPTRTVDTKQAHELAKSYGIPFIETSAKTRQGVEDAFYTLVREIRQYRMKKLNSSDDGTQGCMGLPCVVM</sequence>
<feature type="chain" id="PRO_0000043012" description="GTPase NRas">
    <location>
        <begin position="1"/>
        <end position="186"/>
    </location>
</feature>
<feature type="propeptide" id="PRO_0000043013" description="Removed in mature form" evidence="1">
    <location>
        <begin position="187"/>
        <end position="189"/>
    </location>
</feature>
<feature type="region of interest" description="Hypervariable region" evidence="1">
    <location>
        <begin position="166"/>
        <end position="185"/>
    </location>
</feature>
<feature type="short sequence motif" description="Effector region">
    <location>
        <begin position="32"/>
        <end position="40"/>
    </location>
</feature>
<feature type="binding site" evidence="2">
    <location>
        <begin position="10"/>
        <end position="18"/>
    </location>
    <ligand>
        <name>GTP</name>
        <dbReference type="ChEBI" id="CHEBI:37565"/>
    </ligand>
</feature>
<feature type="binding site" evidence="2">
    <location>
        <begin position="29"/>
        <end position="30"/>
    </location>
    <ligand>
        <name>GTP</name>
        <dbReference type="ChEBI" id="CHEBI:37565"/>
    </ligand>
</feature>
<feature type="binding site" evidence="6">
    <location>
        <begin position="57"/>
        <end position="61"/>
    </location>
    <ligand>
        <name>GTP</name>
        <dbReference type="ChEBI" id="CHEBI:37565"/>
    </ligand>
</feature>
<feature type="binding site" evidence="2">
    <location>
        <begin position="116"/>
        <end position="119"/>
    </location>
    <ligand>
        <name>GTP</name>
        <dbReference type="ChEBI" id="CHEBI:37565"/>
    </ligand>
</feature>
<feature type="modified residue" description="Phosphoserine" evidence="2">
    <location>
        <position position="89"/>
    </location>
</feature>
<feature type="lipid moiety-binding region" description="S-palmitoyl cysteine" evidence="2">
    <location>
        <position position="181"/>
    </location>
</feature>
<feature type="lipid moiety-binding region" description="S-farnesyl cysteine" evidence="2">
    <location>
        <position position="186"/>
    </location>
</feature>
<feature type="cross-link" description="Glycyl lysine isopeptide (Lys-Gly) (interchain with G-Cter in ubiquitin)" evidence="2">
    <location>
        <position position="170"/>
    </location>
</feature>
<comment type="function">
    <text evidence="2">Ras proteins bind GDP/GTP and possess intrinsic GTPase activity.</text>
</comment>
<comment type="catalytic activity">
    <reaction evidence="4">
        <text>GTP + H2O = GDP + phosphate + H(+)</text>
        <dbReference type="Rhea" id="RHEA:19669"/>
        <dbReference type="ChEBI" id="CHEBI:15377"/>
        <dbReference type="ChEBI" id="CHEBI:15378"/>
        <dbReference type="ChEBI" id="CHEBI:37565"/>
        <dbReference type="ChEBI" id="CHEBI:43474"/>
        <dbReference type="ChEBI" id="CHEBI:58189"/>
        <dbReference type="EC" id="3.6.5.2"/>
    </reaction>
</comment>
<comment type="activity regulation">
    <text>Alternates between an inactive form bound to GDP and an active form bound to GTP. Activated by a guanine nucleotide-exchange factor (GEF) and inactivated by a GTPase-activating protein (GAP).</text>
</comment>
<comment type="subunit">
    <text evidence="2 5">Interacts (active GTP-bound form preferentially) with RGS14 (By similarity). Interacts (active GTP-bound form) with RASSF7 (By similarity). Interacts (active GTP-bound form) with both SHOC2 and PP1c (all isoforms) to form a tertiary complex; SHOC2 and PP1c preferably bind M-Ras/MRAS, but they also bind K-Ras/KRAS, N-Ras/NRAS and H-Ras/HRAS (By similarity).</text>
</comment>
<comment type="subcellular location">
    <subcellularLocation>
        <location evidence="2">Cell membrane</location>
        <topology evidence="2">Lipid-anchor</topology>
        <orientation evidence="2">Cytoplasmic side</orientation>
    </subcellularLocation>
    <subcellularLocation>
        <location evidence="2">Golgi apparatus membrane</location>
        <topology evidence="2">Lipid-anchor</topology>
    </subcellularLocation>
    <text evidence="2">Shuttles between the plasma membrane and the Golgi apparatus.</text>
</comment>
<comment type="PTM">
    <text evidence="2">Palmitoylated by the ZDHHC9-GOLGA7 complex. Depalmitoylated by ABHD17A, ABHD17B and ABHD17C. A continuous cycle of de- and re-palmitoylation regulates rapid exchange between plasma membrane and Golgi.</text>
</comment>
<comment type="PTM">
    <text evidence="4">Acetylation at Lys-104 prevents interaction with guanine nucleotide exchange factors (GEFs).</text>
</comment>
<comment type="PTM">
    <text evidence="3">Ubiquitinated by the BCR(LZTR1) E3 ubiquitin ligase complex at Lys-170 in a non-degradative manner, leading to inhibit Ras signaling by decreasing Ras association with membranes.</text>
</comment>
<comment type="PTM">
    <text evidence="2">Phosphorylation at Ser-89 enhances NRAS association with its downstream effectors.</text>
</comment>
<comment type="similarity">
    <text evidence="7">Belongs to the small GTPase superfamily. Ras family.</text>
</comment>
<organism>
    <name type="scientific">Pongo abelii</name>
    <name type="common">Sumatran orangutan</name>
    <name type="synonym">Pongo pygmaeus abelii</name>
    <dbReference type="NCBI Taxonomy" id="9601"/>
    <lineage>
        <taxon>Eukaryota</taxon>
        <taxon>Metazoa</taxon>
        <taxon>Chordata</taxon>
        <taxon>Craniata</taxon>
        <taxon>Vertebrata</taxon>
        <taxon>Euteleostomi</taxon>
        <taxon>Mammalia</taxon>
        <taxon>Eutheria</taxon>
        <taxon>Euarchontoglires</taxon>
        <taxon>Primates</taxon>
        <taxon>Haplorrhini</taxon>
        <taxon>Catarrhini</taxon>
        <taxon>Hominidae</taxon>
        <taxon>Pongo</taxon>
    </lineage>
</organism>
<keyword id="KW-0007">Acetylation</keyword>
<keyword id="KW-1003">Cell membrane</keyword>
<keyword id="KW-0333">Golgi apparatus</keyword>
<keyword id="KW-0342">GTP-binding</keyword>
<keyword id="KW-0378">Hydrolase</keyword>
<keyword id="KW-1017">Isopeptide bond</keyword>
<keyword id="KW-0449">Lipoprotein</keyword>
<keyword id="KW-0472">Membrane</keyword>
<keyword id="KW-0488">Methylation</keyword>
<keyword id="KW-0547">Nucleotide-binding</keyword>
<keyword id="KW-0564">Palmitate</keyword>
<keyword id="KW-0597">Phosphoprotein</keyword>
<keyword id="KW-0636">Prenylation</keyword>
<keyword id="KW-0656">Proto-oncogene</keyword>
<keyword id="KW-1185">Reference proteome</keyword>
<keyword id="KW-0832">Ubl conjugation</keyword>
<gene>
    <name type="primary">NRAS</name>
</gene>
<name>RASN_PONAB</name>
<protein>
    <recommendedName>
        <fullName>GTPase NRas</fullName>
        <ecNumber evidence="4">3.6.5.2</ecNumber>
    </recommendedName>
    <alternativeName>
        <fullName>Transforming protein N-Ras</fullName>
    </alternativeName>
</protein>
<reference key="1">
    <citation type="submission" date="2004-11" db="EMBL/GenBank/DDBJ databases">
        <authorList>
            <consortium name="The German cDNA consortium"/>
        </authorList>
    </citation>
    <scope>NUCLEOTIDE SEQUENCE [LARGE SCALE MRNA]</scope>
    <source>
        <tissue>Kidney</tissue>
    </source>
</reference>